<reference key="1">
    <citation type="journal article" date="2008" name="J. Bacteriol.">
        <title>Comparative genome sequence analysis of multidrug-resistant Acinetobacter baumannii.</title>
        <authorList>
            <person name="Adams M.D."/>
            <person name="Goglin K."/>
            <person name="Molyneaux N."/>
            <person name="Hujer K.M."/>
            <person name="Lavender H."/>
            <person name="Jamison J.J."/>
            <person name="MacDonald I.J."/>
            <person name="Martin K.M."/>
            <person name="Russo T."/>
            <person name="Campagnari A.A."/>
            <person name="Hujer A.M."/>
            <person name="Bonomo R.A."/>
            <person name="Gill S.R."/>
        </authorList>
    </citation>
    <scope>NUCLEOTIDE SEQUENCE [LARGE SCALE GENOMIC DNA]</scope>
    <source>
        <strain>AB0057</strain>
    </source>
</reference>
<accession>B7I9U9</accession>
<proteinExistence type="inferred from homology"/>
<evidence type="ECO:0000255" key="1">
    <source>
        <dbReference type="HAMAP-Rule" id="MF_00183"/>
    </source>
</evidence>
<dbReference type="EC" id="1.1.1.267" evidence="1"/>
<dbReference type="EMBL" id="CP001182">
    <property type="protein sequence ID" value="ACJ42432.1"/>
    <property type="molecule type" value="Genomic_DNA"/>
</dbReference>
<dbReference type="SMR" id="B7I9U9"/>
<dbReference type="KEGG" id="abn:AB57_2316"/>
<dbReference type="HOGENOM" id="CLU_035714_4_0_6"/>
<dbReference type="UniPathway" id="UPA00056">
    <property type="reaction ID" value="UER00092"/>
</dbReference>
<dbReference type="Proteomes" id="UP000007094">
    <property type="component" value="Chromosome"/>
</dbReference>
<dbReference type="GO" id="GO:0030604">
    <property type="term" value="F:1-deoxy-D-xylulose-5-phosphate reductoisomerase activity"/>
    <property type="evidence" value="ECO:0007669"/>
    <property type="project" value="UniProtKB-UniRule"/>
</dbReference>
<dbReference type="GO" id="GO:0030145">
    <property type="term" value="F:manganese ion binding"/>
    <property type="evidence" value="ECO:0007669"/>
    <property type="project" value="TreeGrafter"/>
</dbReference>
<dbReference type="GO" id="GO:0070402">
    <property type="term" value="F:NADPH binding"/>
    <property type="evidence" value="ECO:0007669"/>
    <property type="project" value="InterPro"/>
</dbReference>
<dbReference type="GO" id="GO:0051484">
    <property type="term" value="P:isopentenyl diphosphate biosynthetic process, methylerythritol 4-phosphate pathway involved in terpenoid biosynthetic process"/>
    <property type="evidence" value="ECO:0007669"/>
    <property type="project" value="TreeGrafter"/>
</dbReference>
<dbReference type="FunFam" id="3.40.50.720:FF:000045">
    <property type="entry name" value="1-deoxy-D-xylulose 5-phosphate reductoisomerase"/>
    <property type="match status" value="1"/>
</dbReference>
<dbReference type="Gene3D" id="1.10.1740.10">
    <property type="match status" value="1"/>
</dbReference>
<dbReference type="Gene3D" id="3.40.50.720">
    <property type="entry name" value="NAD(P)-binding Rossmann-like Domain"/>
    <property type="match status" value="1"/>
</dbReference>
<dbReference type="HAMAP" id="MF_00183">
    <property type="entry name" value="DXP_reductoisom"/>
    <property type="match status" value="1"/>
</dbReference>
<dbReference type="InterPro" id="IPR003821">
    <property type="entry name" value="DXP_reductoisomerase"/>
</dbReference>
<dbReference type="InterPro" id="IPR013644">
    <property type="entry name" value="DXP_reductoisomerase_C"/>
</dbReference>
<dbReference type="InterPro" id="IPR013512">
    <property type="entry name" value="DXP_reductoisomerase_N"/>
</dbReference>
<dbReference type="InterPro" id="IPR026877">
    <property type="entry name" value="DXPR_C"/>
</dbReference>
<dbReference type="InterPro" id="IPR036169">
    <property type="entry name" value="DXPR_C_sf"/>
</dbReference>
<dbReference type="InterPro" id="IPR036291">
    <property type="entry name" value="NAD(P)-bd_dom_sf"/>
</dbReference>
<dbReference type="NCBIfam" id="TIGR00243">
    <property type="entry name" value="Dxr"/>
    <property type="match status" value="1"/>
</dbReference>
<dbReference type="NCBIfam" id="NF003938">
    <property type="entry name" value="PRK05447.1-1"/>
    <property type="match status" value="1"/>
</dbReference>
<dbReference type="NCBIfam" id="NF009114">
    <property type="entry name" value="PRK12464.1"/>
    <property type="match status" value="1"/>
</dbReference>
<dbReference type="PANTHER" id="PTHR30525">
    <property type="entry name" value="1-DEOXY-D-XYLULOSE 5-PHOSPHATE REDUCTOISOMERASE"/>
    <property type="match status" value="1"/>
</dbReference>
<dbReference type="PANTHER" id="PTHR30525:SF0">
    <property type="entry name" value="1-DEOXY-D-XYLULOSE 5-PHOSPHATE REDUCTOISOMERASE, CHLOROPLASTIC"/>
    <property type="match status" value="1"/>
</dbReference>
<dbReference type="Pfam" id="PF08436">
    <property type="entry name" value="DXP_redisom_C"/>
    <property type="match status" value="1"/>
</dbReference>
<dbReference type="Pfam" id="PF02670">
    <property type="entry name" value="DXP_reductoisom"/>
    <property type="match status" value="1"/>
</dbReference>
<dbReference type="Pfam" id="PF13288">
    <property type="entry name" value="DXPR_C"/>
    <property type="match status" value="1"/>
</dbReference>
<dbReference type="PIRSF" id="PIRSF006205">
    <property type="entry name" value="Dxp_reductismrs"/>
    <property type="match status" value="1"/>
</dbReference>
<dbReference type="SUPFAM" id="SSF69055">
    <property type="entry name" value="1-deoxy-D-xylulose-5-phosphate reductoisomerase, C-terminal domain"/>
    <property type="match status" value="1"/>
</dbReference>
<dbReference type="SUPFAM" id="SSF55347">
    <property type="entry name" value="Glyceraldehyde-3-phosphate dehydrogenase-like, C-terminal domain"/>
    <property type="match status" value="1"/>
</dbReference>
<dbReference type="SUPFAM" id="SSF51735">
    <property type="entry name" value="NAD(P)-binding Rossmann-fold domains"/>
    <property type="match status" value="1"/>
</dbReference>
<feature type="chain" id="PRO_1000118489" description="1-deoxy-D-xylulose 5-phosphate reductoisomerase">
    <location>
        <begin position="1"/>
        <end position="398"/>
    </location>
</feature>
<feature type="binding site" evidence="1">
    <location>
        <position position="11"/>
    </location>
    <ligand>
        <name>NADPH</name>
        <dbReference type="ChEBI" id="CHEBI:57783"/>
    </ligand>
</feature>
<feature type="binding site" evidence="1">
    <location>
        <position position="12"/>
    </location>
    <ligand>
        <name>NADPH</name>
        <dbReference type="ChEBI" id="CHEBI:57783"/>
    </ligand>
</feature>
<feature type="binding site" evidence="1">
    <location>
        <position position="13"/>
    </location>
    <ligand>
        <name>NADPH</name>
        <dbReference type="ChEBI" id="CHEBI:57783"/>
    </ligand>
</feature>
<feature type="binding site" evidence="1">
    <location>
        <position position="14"/>
    </location>
    <ligand>
        <name>NADPH</name>
        <dbReference type="ChEBI" id="CHEBI:57783"/>
    </ligand>
</feature>
<feature type="binding site" evidence="1">
    <location>
        <position position="125"/>
    </location>
    <ligand>
        <name>NADPH</name>
        <dbReference type="ChEBI" id="CHEBI:57783"/>
    </ligand>
</feature>
<feature type="binding site" evidence="1">
    <location>
        <position position="126"/>
    </location>
    <ligand>
        <name>1-deoxy-D-xylulose 5-phosphate</name>
        <dbReference type="ChEBI" id="CHEBI:57792"/>
    </ligand>
</feature>
<feature type="binding site" evidence="1">
    <location>
        <position position="127"/>
    </location>
    <ligand>
        <name>NADPH</name>
        <dbReference type="ChEBI" id="CHEBI:57783"/>
    </ligand>
</feature>
<feature type="binding site" evidence="1">
    <location>
        <position position="151"/>
    </location>
    <ligand>
        <name>Mn(2+)</name>
        <dbReference type="ChEBI" id="CHEBI:29035"/>
    </ligand>
</feature>
<feature type="binding site" evidence="1">
    <location>
        <position position="152"/>
    </location>
    <ligand>
        <name>1-deoxy-D-xylulose 5-phosphate</name>
        <dbReference type="ChEBI" id="CHEBI:57792"/>
    </ligand>
</feature>
<feature type="binding site" evidence="1">
    <location>
        <position position="153"/>
    </location>
    <ligand>
        <name>1-deoxy-D-xylulose 5-phosphate</name>
        <dbReference type="ChEBI" id="CHEBI:57792"/>
    </ligand>
</feature>
<feature type="binding site" evidence="1">
    <location>
        <position position="153"/>
    </location>
    <ligand>
        <name>Mn(2+)</name>
        <dbReference type="ChEBI" id="CHEBI:29035"/>
    </ligand>
</feature>
<feature type="binding site" evidence="1">
    <location>
        <position position="186"/>
    </location>
    <ligand>
        <name>1-deoxy-D-xylulose 5-phosphate</name>
        <dbReference type="ChEBI" id="CHEBI:57792"/>
    </ligand>
</feature>
<feature type="binding site" evidence="1">
    <location>
        <position position="209"/>
    </location>
    <ligand>
        <name>1-deoxy-D-xylulose 5-phosphate</name>
        <dbReference type="ChEBI" id="CHEBI:57792"/>
    </ligand>
</feature>
<feature type="binding site" evidence="1">
    <location>
        <position position="215"/>
    </location>
    <ligand>
        <name>NADPH</name>
        <dbReference type="ChEBI" id="CHEBI:57783"/>
    </ligand>
</feature>
<feature type="binding site" evidence="1">
    <location>
        <position position="222"/>
    </location>
    <ligand>
        <name>1-deoxy-D-xylulose 5-phosphate</name>
        <dbReference type="ChEBI" id="CHEBI:57792"/>
    </ligand>
</feature>
<feature type="binding site" evidence="1">
    <location>
        <position position="227"/>
    </location>
    <ligand>
        <name>1-deoxy-D-xylulose 5-phosphate</name>
        <dbReference type="ChEBI" id="CHEBI:57792"/>
    </ligand>
</feature>
<feature type="binding site" evidence="1">
    <location>
        <position position="228"/>
    </location>
    <ligand>
        <name>1-deoxy-D-xylulose 5-phosphate</name>
        <dbReference type="ChEBI" id="CHEBI:57792"/>
    </ligand>
</feature>
<feature type="binding site" evidence="1">
    <location>
        <position position="231"/>
    </location>
    <ligand>
        <name>1-deoxy-D-xylulose 5-phosphate</name>
        <dbReference type="ChEBI" id="CHEBI:57792"/>
    </ligand>
</feature>
<feature type="binding site" evidence="1">
    <location>
        <position position="231"/>
    </location>
    <ligand>
        <name>Mn(2+)</name>
        <dbReference type="ChEBI" id="CHEBI:29035"/>
    </ligand>
</feature>
<comment type="function">
    <text evidence="1">Catalyzes the NADPH-dependent rearrangement and reduction of 1-deoxy-D-xylulose-5-phosphate (DXP) to 2-C-methyl-D-erythritol 4-phosphate (MEP).</text>
</comment>
<comment type="catalytic activity">
    <reaction evidence="1">
        <text>2-C-methyl-D-erythritol 4-phosphate + NADP(+) = 1-deoxy-D-xylulose 5-phosphate + NADPH + H(+)</text>
        <dbReference type="Rhea" id="RHEA:13717"/>
        <dbReference type="ChEBI" id="CHEBI:15378"/>
        <dbReference type="ChEBI" id="CHEBI:57783"/>
        <dbReference type="ChEBI" id="CHEBI:57792"/>
        <dbReference type="ChEBI" id="CHEBI:58262"/>
        <dbReference type="ChEBI" id="CHEBI:58349"/>
        <dbReference type="EC" id="1.1.1.267"/>
    </reaction>
    <physiologicalReaction direction="right-to-left" evidence="1">
        <dbReference type="Rhea" id="RHEA:13719"/>
    </physiologicalReaction>
</comment>
<comment type="cofactor">
    <cofactor evidence="1">
        <name>Mg(2+)</name>
        <dbReference type="ChEBI" id="CHEBI:18420"/>
    </cofactor>
    <cofactor evidence="1">
        <name>Mn(2+)</name>
        <dbReference type="ChEBI" id="CHEBI:29035"/>
    </cofactor>
</comment>
<comment type="pathway">
    <text evidence="1">Isoprenoid biosynthesis; isopentenyl diphosphate biosynthesis via DXP pathway; isopentenyl diphosphate from 1-deoxy-D-xylulose 5-phosphate: step 1/6.</text>
</comment>
<comment type="similarity">
    <text evidence="1">Belongs to the DXR family.</text>
</comment>
<sequence>MTQSVCILGVTGSIGRSTLKILGQHPDKYSVFAVSAHSRISELVEICKQFRPKVVVVPEQKIAELKTLFAQQNISDIDVLAGQEGLVDIASHTDVDIVMAAIVGAAGLLPTLAAVKAGKRVLLANKEALVMSGEIMMQAARDHQALLLPVDSEHNAIFQSLPHNYLQADRTGQPQLGVSKILLTASGGPFLNHSLEQLVHVTPQQACKHPNWSMGQKISVDSATLMNKGLELIEACHLFSISEHFVTVVVHPQSIIHSMVQYVDGSTLAQMGNPDMCTPIAHALAWPERLQTNVPALDLFEYSQLNFQAPDTQKFPALNLARQAMRAGGLAPTILNAANEIAVEAFLMERIGFTSIPQVVEHTLEKLENAAAESIECILDKDKVARSVAQQYISSIGG</sequence>
<protein>
    <recommendedName>
        <fullName evidence="1">1-deoxy-D-xylulose 5-phosphate reductoisomerase</fullName>
        <shortName evidence="1">DXP reductoisomerase</shortName>
        <ecNumber evidence="1">1.1.1.267</ecNumber>
    </recommendedName>
    <alternativeName>
        <fullName evidence="1">1-deoxyxylulose-5-phosphate reductoisomerase</fullName>
    </alternativeName>
    <alternativeName>
        <fullName evidence="1">2-C-methyl-D-erythritol 4-phosphate synthase</fullName>
    </alternativeName>
</protein>
<name>DXR_ACIB5</name>
<organism>
    <name type="scientific">Acinetobacter baumannii (strain AB0057)</name>
    <dbReference type="NCBI Taxonomy" id="480119"/>
    <lineage>
        <taxon>Bacteria</taxon>
        <taxon>Pseudomonadati</taxon>
        <taxon>Pseudomonadota</taxon>
        <taxon>Gammaproteobacteria</taxon>
        <taxon>Moraxellales</taxon>
        <taxon>Moraxellaceae</taxon>
        <taxon>Acinetobacter</taxon>
        <taxon>Acinetobacter calcoaceticus/baumannii complex</taxon>
    </lineage>
</organism>
<gene>
    <name evidence="1" type="primary">dxr</name>
    <name type="ordered locus">AB57_2316</name>
</gene>
<keyword id="KW-0414">Isoprene biosynthesis</keyword>
<keyword id="KW-0464">Manganese</keyword>
<keyword id="KW-0479">Metal-binding</keyword>
<keyword id="KW-0521">NADP</keyword>
<keyword id="KW-0560">Oxidoreductase</keyword>